<gene>
    <name evidence="1" type="primary">rplP</name>
    <name type="ordered locus">Hac_0143</name>
</gene>
<evidence type="ECO:0000255" key="1">
    <source>
        <dbReference type="HAMAP-Rule" id="MF_01342"/>
    </source>
</evidence>
<evidence type="ECO:0000256" key="2">
    <source>
        <dbReference type="SAM" id="MobiDB-lite"/>
    </source>
</evidence>
<evidence type="ECO:0000305" key="3"/>
<keyword id="KW-0687">Ribonucleoprotein</keyword>
<keyword id="KW-0689">Ribosomal protein</keyword>
<keyword id="KW-0694">RNA-binding</keyword>
<keyword id="KW-0699">rRNA-binding</keyword>
<keyword id="KW-0820">tRNA-binding</keyword>
<organism>
    <name type="scientific">Helicobacter acinonychis (strain Sheeba)</name>
    <dbReference type="NCBI Taxonomy" id="382638"/>
    <lineage>
        <taxon>Bacteria</taxon>
        <taxon>Pseudomonadati</taxon>
        <taxon>Campylobacterota</taxon>
        <taxon>Epsilonproteobacteria</taxon>
        <taxon>Campylobacterales</taxon>
        <taxon>Helicobacteraceae</taxon>
        <taxon>Helicobacter</taxon>
    </lineage>
</organism>
<accession>Q17ZD1</accession>
<proteinExistence type="inferred from homology"/>
<feature type="chain" id="PRO_1000054633" description="Large ribosomal subunit protein uL16">
    <location>
        <begin position="1"/>
        <end position="141"/>
    </location>
</feature>
<feature type="region of interest" description="Disordered" evidence="2">
    <location>
        <begin position="1"/>
        <end position="23"/>
    </location>
</feature>
<protein>
    <recommendedName>
        <fullName evidence="1">Large ribosomal subunit protein uL16</fullName>
    </recommendedName>
    <alternativeName>
        <fullName evidence="3">50S ribosomal protein L16</fullName>
    </alternativeName>
</protein>
<name>RL16_HELAH</name>
<dbReference type="EMBL" id="AM260522">
    <property type="protein sequence ID" value="CAJ98995.1"/>
    <property type="molecule type" value="Genomic_DNA"/>
</dbReference>
<dbReference type="RefSeq" id="WP_011577115.1">
    <property type="nucleotide sequence ID" value="NC_008229.1"/>
</dbReference>
<dbReference type="SMR" id="Q17ZD1"/>
<dbReference type="STRING" id="382638.Hac_0143"/>
<dbReference type="GeneID" id="31757672"/>
<dbReference type="KEGG" id="hac:Hac_0143"/>
<dbReference type="eggNOG" id="COG0197">
    <property type="taxonomic scope" value="Bacteria"/>
</dbReference>
<dbReference type="HOGENOM" id="CLU_078858_2_1_7"/>
<dbReference type="OrthoDB" id="9802589at2"/>
<dbReference type="BioCyc" id="HACI382638:HAC_RS00615-MONOMER"/>
<dbReference type="Proteomes" id="UP000000775">
    <property type="component" value="Chromosome"/>
</dbReference>
<dbReference type="GO" id="GO:0022625">
    <property type="term" value="C:cytosolic large ribosomal subunit"/>
    <property type="evidence" value="ECO:0007669"/>
    <property type="project" value="TreeGrafter"/>
</dbReference>
<dbReference type="GO" id="GO:0019843">
    <property type="term" value="F:rRNA binding"/>
    <property type="evidence" value="ECO:0007669"/>
    <property type="project" value="UniProtKB-UniRule"/>
</dbReference>
<dbReference type="GO" id="GO:0003735">
    <property type="term" value="F:structural constituent of ribosome"/>
    <property type="evidence" value="ECO:0007669"/>
    <property type="project" value="InterPro"/>
</dbReference>
<dbReference type="GO" id="GO:0000049">
    <property type="term" value="F:tRNA binding"/>
    <property type="evidence" value="ECO:0007669"/>
    <property type="project" value="UniProtKB-KW"/>
</dbReference>
<dbReference type="GO" id="GO:0006412">
    <property type="term" value="P:translation"/>
    <property type="evidence" value="ECO:0007669"/>
    <property type="project" value="UniProtKB-UniRule"/>
</dbReference>
<dbReference type="CDD" id="cd01433">
    <property type="entry name" value="Ribosomal_L16_L10e"/>
    <property type="match status" value="1"/>
</dbReference>
<dbReference type="FunFam" id="3.90.1170.10:FF:000001">
    <property type="entry name" value="50S ribosomal protein L16"/>
    <property type="match status" value="1"/>
</dbReference>
<dbReference type="Gene3D" id="3.90.1170.10">
    <property type="entry name" value="Ribosomal protein L10e/L16"/>
    <property type="match status" value="1"/>
</dbReference>
<dbReference type="HAMAP" id="MF_01342">
    <property type="entry name" value="Ribosomal_uL16"/>
    <property type="match status" value="1"/>
</dbReference>
<dbReference type="InterPro" id="IPR047873">
    <property type="entry name" value="Ribosomal_uL16"/>
</dbReference>
<dbReference type="InterPro" id="IPR000114">
    <property type="entry name" value="Ribosomal_uL16_bact-type"/>
</dbReference>
<dbReference type="InterPro" id="IPR020798">
    <property type="entry name" value="Ribosomal_uL16_CS"/>
</dbReference>
<dbReference type="InterPro" id="IPR016180">
    <property type="entry name" value="Ribosomal_uL16_dom"/>
</dbReference>
<dbReference type="InterPro" id="IPR036920">
    <property type="entry name" value="Ribosomal_uL16_sf"/>
</dbReference>
<dbReference type="NCBIfam" id="TIGR01164">
    <property type="entry name" value="rplP_bact"/>
    <property type="match status" value="1"/>
</dbReference>
<dbReference type="PANTHER" id="PTHR12220">
    <property type="entry name" value="50S/60S RIBOSOMAL PROTEIN L16"/>
    <property type="match status" value="1"/>
</dbReference>
<dbReference type="PANTHER" id="PTHR12220:SF13">
    <property type="entry name" value="LARGE RIBOSOMAL SUBUNIT PROTEIN UL16M"/>
    <property type="match status" value="1"/>
</dbReference>
<dbReference type="Pfam" id="PF00252">
    <property type="entry name" value="Ribosomal_L16"/>
    <property type="match status" value="1"/>
</dbReference>
<dbReference type="PRINTS" id="PR00060">
    <property type="entry name" value="RIBOSOMALL16"/>
</dbReference>
<dbReference type="SUPFAM" id="SSF54686">
    <property type="entry name" value="Ribosomal protein L16p/L10e"/>
    <property type="match status" value="1"/>
</dbReference>
<dbReference type="PROSITE" id="PS00586">
    <property type="entry name" value="RIBOSOMAL_L16_1"/>
    <property type="match status" value="1"/>
</dbReference>
<dbReference type="PROSITE" id="PS00701">
    <property type="entry name" value="RIBOSOMAL_L16_2"/>
    <property type="match status" value="1"/>
</dbReference>
<sequence length="141" mass="16032">MLMPKRTKYRKQMKGRNRGKAHRGNSIAFGDIAIKAIEHGRIDSRQIESARVAMTRHVKRAGKVWIRVFPDKPLTAKPLETRMGKGKGSVEKWVMNIKPGRIVYEMLGIEEGLAREALALAQSKLPFKTKIVTCESENEIY</sequence>
<reference key="1">
    <citation type="journal article" date="2006" name="PLoS Genet.">
        <title>Who ate whom? Adaptive Helicobacter genomic changes that accompanied a host jump from early humans to large felines.</title>
        <authorList>
            <person name="Eppinger M."/>
            <person name="Baar C."/>
            <person name="Linz B."/>
            <person name="Raddatz G."/>
            <person name="Lanz C."/>
            <person name="Keller H."/>
            <person name="Morelli G."/>
            <person name="Gressmann H."/>
            <person name="Achtman M."/>
            <person name="Schuster S.C."/>
        </authorList>
    </citation>
    <scope>NUCLEOTIDE SEQUENCE [LARGE SCALE GENOMIC DNA]</scope>
    <source>
        <strain>Sheeba</strain>
    </source>
</reference>
<comment type="function">
    <text evidence="1">Binds 23S rRNA and is also seen to make contacts with the A and possibly P site tRNAs.</text>
</comment>
<comment type="subunit">
    <text evidence="1">Part of the 50S ribosomal subunit.</text>
</comment>
<comment type="similarity">
    <text evidence="1">Belongs to the universal ribosomal protein uL16 family.</text>
</comment>